<dbReference type="EMBL" id="AF049617">
    <property type="protein sequence ID" value="AAD20438.1"/>
    <property type="molecule type" value="mRNA"/>
</dbReference>
<dbReference type="EMBL" id="U26707">
    <property type="protein sequence ID" value="AAC52242.1"/>
    <property type="molecule type" value="mRNA"/>
</dbReference>
<dbReference type="EMBL" id="AK158609">
    <property type="protein sequence ID" value="BAE34580.1"/>
    <property type="molecule type" value="mRNA"/>
</dbReference>
<dbReference type="EMBL" id="U59964">
    <property type="protein sequence ID" value="AAC52708.1"/>
    <property type="molecule type" value="Genomic_DNA"/>
</dbReference>
<dbReference type="EMBL" id="U59963">
    <property type="protein sequence ID" value="AAC52708.1"/>
    <property type="status" value="JOINED"/>
    <property type="molecule type" value="Genomic_DNA"/>
</dbReference>
<dbReference type="EMBL" id="U23158">
    <property type="protein sequence ID" value="AAA65599.1"/>
    <property type="molecule type" value="mRNA"/>
</dbReference>
<dbReference type="CCDS" id="CCDS57011.1">
    <molecule id="Q9WTU3-1"/>
</dbReference>
<dbReference type="RefSeq" id="NP_001070967.1">
    <property type="nucleotide sequence ID" value="NM_001077499.2"/>
</dbReference>
<dbReference type="RefSeq" id="NP_035453.2">
    <property type="nucleotide sequence ID" value="NM_011323.3"/>
</dbReference>
<dbReference type="PDB" id="3WFN">
    <property type="method" value="X-ray"/>
    <property type="resolution" value="1.95 A"/>
    <property type="chains" value="B/C/D/E=1893-1914"/>
</dbReference>
<dbReference type="PDBsum" id="3WFN"/>
<dbReference type="SMR" id="Q9WTU3"/>
<dbReference type="BioGRID" id="203103">
    <property type="interactions" value="8"/>
</dbReference>
<dbReference type="CORUM" id="Q9WTU3"/>
<dbReference type="FunCoup" id="Q9WTU3">
    <property type="interactions" value="485"/>
</dbReference>
<dbReference type="IntAct" id="Q9WTU3">
    <property type="interactions" value="2"/>
</dbReference>
<dbReference type="MINT" id="Q9WTU3"/>
<dbReference type="STRING" id="10090.ENSMUSP00000080842"/>
<dbReference type="BindingDB" id="Q9WTU3"/>
<dbReference type="ChEMBL" id="CHEMBL1914275"/>
<dbReference type="GuidetoPHARMACOLOGY" id="583"/>
<dbReference type="GlyCosmos" id="Q9WTU3">
    <property type="glycosylation" value="8 sites, No reported glycans"/>
</dbReference>
<dbReference type="GlyGen" id="Q9WTU3">
    <property type="glycosylation" value="9 sites, 1 N-linked glycan (2 sites)"/>
</dbReference>
<dbReference type="iPTMnet" id="Q9WTU3"/>
<dbReference type="PhosphoSitePlus" id="Q9WTU3"/>
<dbReference type="SwissPalm" id="Q9WTU3"/>
<dbReference type="jPOST" id="Q9WTU3"/>
<dbReference type="PaxDb" id="10090-ENSMUSP00000080842"/>
<dbReference type="ProteomicsDB" id="253416">
    <molecule id="Q9WTU3-1"/>
</dbReference>
<dbReference type="ProteomicsDB" id="253417">
    <molecule id="Q9WTU3-2"/>
</dbReference>
<dbReference type="ProteomicsDB" id="253418">
    <molecule id="Q9WTU3-3"/>
</dbReference>
<dbReference type="ProteomicsDB" id="253419">
    <molecule id="Q9WTU3-4"/>
</dbReference>
<dbReference type="ProteomicsDB" id="253420">
    <molecule id="Q9WTU3-5"/>
</dbReference>
<dbReference type="ABCD" id="Q9WTU3">
    <property type="antibodies" value="1 sequenced antibody"/>
</dbReference>
<dbReference type="DNASU" id="20273"/>
<dbReference type="GeneID" id="20273"/>
<dbReference type="KEGG" id="mmu:20273"/>
<dbReference type="AGR" id="MGI:103169"/>
<dbReference type="CTD" id="6334"/>
<dbReference type="MGI" id="MGI:103169">
    <property type="gene designation" value="Scn8a"/>
</dbReference>
<dbReference type="eggNOG" id="KOG2301">
    <property type="taxonomic scope" value="Eukaryota"/>
</dbReference>
<dbReference type="InParanoid" id="Q9WTU3"/>
<dbReference type="OrthoDB" id="2984333at2759"/>
<dbReference type="PhylomeDB" id="Q9WTU3"/>
<dbReference type="BioGRID-ORCS" id="20273">
    <property type="hits" value="0 hits in 81 CRISPR screens"/>
</dbReference>
<dbReference type="ChiTaRS" id="Scn8a">
    <property type="organism name" value="mouse"/>
</dbReference>
<dbReference type="EvolutionaryTrace" id="Q9WTU3"/>
<dbReference type="PRO" id="PR:Q9WTU3"/>
<dbReference type="Proteomes" id="UP000000589">
    <property type="component" value="Unplaced"/>
</dbReference>
<dbReference type="RNAct" id="Q9WTU3">
    <property type="molecule type" value="protein"/>
</dbReference>
<dbReference type="GO" id="GO:0070161">
    <property type="term" value="C:anchoring junction"/>
    <property type="evidence" value="ECO:0007669"/>
    <property type="project" value="UniProtKB-KW"/>
</dbReference>
<dbReference type="GO" id="GO:0031410">
    <property type="term" value="C:cytoplasmic vesicle"/>
    <property type="evidence" value="ECO:0007669"/>
    <property type="project" value="UniProtKB-KW"/>
</dbReference>
<dbReference type="GO" id="GO:0030425">
    <property type="term" value="C:dendrite"/>
    <property type="evidence" value="ECO:0000314"/>
    <property type="project" value="MGI"/>
</dbReference>
<dbReference type="GO" id="GO:0016020">
    <property type="term" value="C:membrane"/>
    <property type="evidence" value="ECO:0000314"/>
    <property type="project" value="MGI"/>
</dbReference>
<dbReference type="GO" id="GO:0043025">
    <property type="term" value="C:neuronal cell body"/>
    <property type="evidence" value="ECO:0000314"/>
    <property type="project" value="MGI"/>
</dbReference>
<dbReference type="GO" id="GO:0033268">
    <property type="term" value="C:node of Ranvier"/>
    <property type="evidence" value="ECO:0000314"/>
    <property type="project" value="BHF-UCL"/>
</dbReference>
<dbReference type="GO" id="GO:0002102">
    <property type="term" value="C:podosome"/>
    <property type="evidence" value="ECO:0007669"/>
    <property type="project" value="UniProtKB-SubCell"/>
</dbReference>
<dbReference type="GO" id="GO:0034706">
    <property type="term" value="C:sodium channel complex"/>
    <property type="evidence" value="ECO:0000353"/>
    <property type="project" value="MGI"/>
</dbReference>
<dbReference type="GO" id="GO:0001518">
    <property type="term" value="C:voltage-gated sodium channel complex"/>
    <property type="evidence" value="ECO:0000250"/>
    <property type="project" value="UniProtKB"/>
</dbReference>
<dbReference type="GO" id="GO:0030018">
    <property type="term" value="C:Z disc"/>
    <property type="evidence" value="ECO:0000314"/>
    <property type="project" value="BHF-UCL"/>
</dbReference>
<dbReference type="GO" id="GO:0031402">
    <property type="term" value="F:sodium ion binding"/>
    <property type="evidence" value="ECO:0000250"/>
    <property type="project" value="UniProtKB"/>
</dbReference>
<dbReference type="GO" id="GO:0005248">
    <property type="term" value="F:voltage-gated sodium channel activity"/>
    <property type="evidence" value="ECO:0000250"/>
    <property type="project" value="UniProtKB"/>
</dbReference>
<dbReference type="GO" id="GO:0007628">
    <property type="term" value="P:adult walking behavior"/>
    <property type="evidence" value="ECO:0000315"/>
    <property type="project" value="MGI"/>
</dbReference>
<dbReference type="GO" id="GO:0007626">
    <property type="term" value="P:locomotory behavior"/>
    <property type="evidence" value="ECO:0000315"/>
    <property type="project" value="MGI"/>
</dbReference>
<dbReference type="GO" id="GO:0007517">
    <property type="term" value="P:muscle organ development"/>
    <property type="evidence" value="ECO:0000315"/>
    <property type="project" value="MGI"/>
</dbReference>
<dbReference type="GO" id="GO:0021675">
    <property type="term" value="P:nerve development"/>
    <property type="evidence" value="ECO:0000315"/>
    <property type="project" value="MGI"/>
</dbReference>
<dbReference type="GO" id="GO:0009636">
    <property type="term" value="P:response to toxic substance"/>
    <property type="evidence" value="ECO:0000314"/>
    <property type="project" value="MGI"/>
</dbReference>
<dbReference type="GO" id="GO:0007605">
    <property type="term" value="P:sensory perception of sound"/>
    <property type="evidence" value="ECO:0000315"/>
    <property type="project" value="MGI"/>
</dbReference>
<dbReference type="GO" id="GO:0006814">
    <property type="term" value="P:sodium ion transport"/>
    <property type="evidence" value="ECO:0000303"/>
    <property type="project" value="UniProtKB"/>
</dbReference>
<dbReference type="CDD" id="cd13433">
    <property type="entry name" value="Na_channel_gate"/>
    <property type="match status" value="1"/>
</dbReference>
<dbReference type="FunFam" id="1.10.238.10:FF:000002">
    <property type="entry name" value="Sodium channel protein"/>
    <property type="match status" value="1"/>
</dbReference>
<dbReference type="FunFam" id="1.10.287.70:FF:000001">
    <property type="entry name" value="Sodium channel protein"/>
    <property type="match status" value="1"/>
</dbReference>
<dbReference type="FunFam" id="1.10.287.70:FF:000006">
    <property type="entry name" value="Sodium channel protein"/>
    <property type="match status" value="1"/>
</dbReference>
<dbReference type="FunFam" id="1.20.120.350:FF:000002">
    <property type="entry name" value="Sodium channel protein"/>
    <property type="match status" value="1"/>
</dbReference>
<dbReference type="FunFam" id="1.20.120.350:FF:000004">
    <property type="entry name" value="Sodium channel protein"/>
    <property type="match status" value="1"/>
</dbReference>
<dbReference type="FunFam" id="1.20.120.350:FF:000005">
    <property type="entry name" value="Sodium channel protein"/>
    <property type="match status" value="1"/>
</dbReference>
<dbReference type="FunFam" id="1.20.5.1190:FF:000003">
    <property type="entry name" value="Sodium channel protein"/>
    <property type="match status" value="1"/>
</dbReference>
<dbReference type="FunFam" id="1.20.120.350:FF:000003">
    <property type="entry name" value="Voltage-dependent sodium channel"/>
    <property type="match status" value="1"/>
</dbReference>
<dbReference type="Gene3D" id="1.10.287.70">
    <property type="match status" value="4"/>
</dbReference>
<dbReference type="Gene3D" id="1.10.238.10">
    <property type="entry name" value="EF-hand"/>
    <property type="match status" value="1"/>
</dbReference>
<dbReference type="Gene3D" id="1.20.5.1190">
    <property type="entry name" value="iswi atpase"/>
    <property type="match status" value="1"/>
</dbReference>
<dbReference type="Gene3D" id="1.20.120.350">
    <property type="entry name" value="Voltage-gated potassium channels. Chain C"/>
    <property type="match status" value="4"/>
</dbReference>
<dbReference type="InterPro" id="IPR005821">
    <property type="entry name" value="Ion_trans_dom"/>
</dbReference>
<dbReference type="InterPro" id="IPR000048">
    <property type="entry name" value="IQ_motif_EF-hand-BS"/>
</dbReference>
<dbReference type="InterPro" id="IPR008054">
    <property type="entry name" value="Na_channel_a8su"/>
</dbReference>
<dbReference type="InterPro" id="IPR001696">
    <property type="entry name" value="Na_channel_asu"/>
</dbReference>
<dbReference type="InterPro" id="IPR044564">
    <property type="entry name" value="Na_chnl_inactivation_gate"/>
</dbReference>
<dbReference type="InterPro" id="IPR010526">
    <property type="entry name" value="Na_trans_assoc_dom"/>
</dbReference>
<dbReference type="InterPro" id="IPR024583">
    <property type="entry name" value="Na_trans_cytopl"/>
</dbReference>
<dbReference type="InterPro" id="IPR043203">
    <property type="entry name" value="VGCC_Ca_Na"/>
</dbReference>
<dbReference type="InterPro" id="IPR027359">
    <property type="entry name" value="Volt_channel_dom_sf"/>
</dbReference>
<dbReference type="PANTHER" id="PTHR10037:SF23">
    <property type="entry name" value="SODIUM CHANNEL PROTEIN TYPE 8 SUBUNIT ALPHA"/>
    <property type="match status" value="1"/>
</dbReference>
<dbReference type="PANTHER" id="PTHR10037">
    <property type="entry name" value="VOLTAGE-GATED CATION CHANNEL CALCIUM AND SODIUM"/>
    <property type="match status" value="1"/>
</dbReference>
<dbReference type="Pfam" id="PF00520">
    <property type="entry name" value="Ion_trans"/>
    <property type="match status" value="4"/>
</dbReference>
<dbReference type="Pfam" id="PF24609">
    <property type="entry name" value="IQ_SCN5A_C"/>
    <property type="match status" value="1"/>
</dbReference>
<dbReference type="Pfam" id="PF06512">
    <property type="entry name" value="Na_trans_assoc"/>
    <property type="match status" value="1"/>
</dbReference>
<dbReference type="Pfam" id="PF11933">
    <property type="entry name" value="Na_trans_cytopl"/>
    <property type="match status" value="1"/>
</dbReference>
<dbReference type="PRINTS" id="PR00170">
    <property type="entry name" value="NACHANNEL"/>
</dbReference>
<dbReference type="PRINTS" id="PR01667">
    <property type="entry name" value="NACHANNEL8"/>
</dbReference>
<dbReference type="SMART" id="SM00015">
    <property type="entry name" value="IQ"/>
    <property type="match status" value="1"/>
</dbReference>
<dbReference type="SUPFAM" id="SSF81324">
    <property type="entry name" value="Voltage-gated potassium channels"/>
    <property type="match status" value="4"/>
</dbReference>
<dbReference type="PROSITE" id="PS50096">
    <property type="entry name" value="IQ"/>
    <property type="match status" value="1"/>
</dbReference>
<keyword id="KW-0002">3D-structure</keyword>
<keyword id="KW-0025">Alternative splicing</keyword>
<keyword id="KW-0965">Cell junction</keyword>
<keyword id="KW-1003">Cell membrane</keyword>
<keyword id="KW-0966">Cell projection</keyword>
<keyword id="KW-0968">Cytoplasmic vesicle</keyword>
<keyword id="KW-0225">Disease variant</keyword>
<keyword id="KW-1015">Disulfide bond</keyword>
<keyword id="KW-0325">Glycoprotein</keyword>
<keyword id="KW-0407">Ion channel</keyword>
<keyword id="KW-0406">Ion transport</keyword>
<keyword id="KW-0472">Membrane</keyword>
<keyword id="KW-0479">Metal-binding</keyword>
<keyword id="KW-0597">Phosphoprotein</keyword>
<keyword id="KW-1185">Reference proteome</keyword>
<keyword id="KW-0677">Repeat</keyword>
<keyword id="KW-0915">Sodium</keyword>
<keyword id="KW-0894">Sodium channel</keyword>
<keyword id="KW-0739">Sodium transport</keyword>
<keyword id="KW-0812">Transmembrane</keyword>
<keyword id="KW-1133">Transmembrane helix</keyword>
<keyword id="KW-0813">Transport</keyword>
<keyword id="KW-0832">Ubl conjugation</keyword>
<keyword id="KW-0851">Voltage-gated channel</keyword>
<protein>
    <recommendedName>
        <fullName>Sodium channel protein type 8 subunit alpha</fullName>
    </recommendedName>
    <alternativeName>
        <fullName>Sodium channel protein type VIII subunit alpha</fullName>
    </alternativeName>
    <alternativeName>
        <fullName evidence="22">Voltage-gated sodium channel subunit alpha Nav1.6</fullName>
    </alternativeName>
</protein>
<organism evidence="30">
    <name type="scientific">Mus musculus</name>
    <name type="common">Mouse</name>
    <dbReference type="NCBI Taxonomy" id="10090"/>
    <lineage>
        <taxon>Eukaryota</taxon>
        <taxon>Metazoa</taxon>
        <taxon>Chordata</taxon>
        <taxon>Craniata</taxon>
        <taxon>Vertebrata</taxon>
        <taxon>Euteleostomi</taxon>
        <taxon>Mammalia</taxon>
        <taxon>Eutheria</taxon>
        <taxon>Euarchontoglires</taxon>
        <taxon>Glires</taxon>
        <taxon>Rodentia</taxon>
        <taxon>Myomorpha</taxon>
        <taxon>Muroidea</taxon>
        <taxon>Muridae</taxon>
        <taxon>Murinae</taxon>
        <taxon>Mus</taxon>
        <taxon>Mus</taxon>
    </lineage>
</organism>
<sequence>MAARVLAPPGPDSFKPFTPESLANIERRIAESKLKKPPKADGSHREDDEDSKPKPNSDLEAGKSLPFIYGDIPQGLVAVPLEDFDPYYLTQKTFVVLNRGKTLFRFSATPALYILSPFNLIRRIAIKILIHSVFSMIIMCTILTNCVFMTFSNPPEWSKNVEYTFTGIYTFESLVKIIARGFCIDGFTFLRDPWNWLDFSVIMMAYVTEFVDLGNVSALRTFRVLRALKTISVIPGLKTIVGALIQSVKKLSDVMILTVFCLSVFALIGLQLFMGNLRNKCVVWPINFNESYLENGTRGFDWEEYINNKTNFYMVPGMLEPLLCGNSSDAGQCPEGFQCMKAGRNPNYGYTSFDTFSWAFLALFRLMTQDYWENLYQLTLRAAGKTYMIFFVLVIFVGSFYLVNLILAVVAMAYEEQNQATLEEAEQKEAEFKAMLEQLKKQQEEAQAAAMATSAGTVSEDAIEEEGEDGVGSPRSSSELSKLSSKSAKERRNRRKKRKQKELSEGEEKGDPEKVFKSESEDGMRRKAFRLPDNRIGRKFSIMNQSLLSIPGSPFLSRHNSKSSIFSFRGPGRFRDPGSENEFADDEHSTVEESEGRRDSLFIPIRARERRSSYSGYSGYSQCSRSSRIFPSLRRSVKRNSTVDCNGVVSLIGPGSHIGRLLPEATTEVEIKKKGPGSLLVSMEQLASYGRKDRINSIMSVVTNTLVEELEESQRKCPPCWYKFANTFLIWECHPYWIKLKEIVNLIVMDPFVDLAITICIVLNTLFMAMEHHPMTPQFEHVLAVGNLVFTGIFTAEMFLKLIAMDPYYYFQEGWNIFDGFIVSLSLMELGLADVEGLSVLRSFRLLRVFKLAKSWPTLNMLIKIIGNSVGALGNLTLVLAIIVFIFAVVGMQLFGKSYKECVCKISQECKLPRWHMNDFFHSFLIVFRVLCGEWIETMWDCMEVAGQAMCLIVFMMVMVIGNLVVLNLFLALLLSSFSADNLAATDDDGEMNNLQISVIRIKKGVAWAKVKVHAFMQAHFKQREADEVKPLDELYEKKANCIANHTGVDIHRNGDFQKNGNGTTSGIGSSVEKYIIDEDHMSFINNPNLTVRVPIAVGESDFENLNTEDVSSESDPEGSKDKLDDTSSSEGSTIDIKPEVEEVPVEQPEEYLDPDACFTEGCVQRFKCCQVNIEEGLGKSWWILRKTCFLIVEHNWFETFIIFMILLSSGALAFEDIYIEQRKTIRTILEYADKVFTYIFILEMLLKWTAYGFVKFFTNAWCWLDFLIVAVSLVSLIANALGYSELGAIKSLRTLRALRPLRALSRFEGMRVVVNALVGAIPSIMNVLLVCLIFWLIFSIMGVNLFAGKYHYCFNETSEIRFEIDEVNNKTDCEKLMEGNNTEIRWKNVKINFDNVGAGYLALLQVATFKGWMDIMYAAVDSRKPDEQPDYEGNIYMYIYFVIFIIFGSFFTLNLFIGVIIDNFNQQKKKFGGQDIFMTEEQKKYYNAMKKLGSKKPQKPIPRPLNKIQGIVFDFVTQQAFDIVIMMLICLNMVTMMVETDTQSKQMENILYWINLVFVIFFTCECVLKMFALRHYYFTIGWNIFDFVVVILSIVGMFLADIIEKYFVSPTLFRVIRLARIGRILRLIKGAKGIRTLLFALMMSLPALFNIGLLLFLVMFIFSIFGMSNFAYVKHEAGIDDMFNFETFGNSMICLFQITTSAGWDGLLLPILNRPPDCSLDKEHPGSGFKGDCGNPSVGIFFFVSYIIISFLIVVNMYIAIILENFSVATEESADPLSEDDFETFYEIWEKFDPDATQFIEYCKLADFADALEHPLRVPKPNTIELIAMDLPMVSGDRIHCLDILFAFTKRVLGDSGELDILRQQMEERFVASNPSKVSYEPITTTLRRKQEEVSAVVLQRAYRGHLARRGFICRKITSNKLENGGTHREKKESTPSTASLPSYDSVTKPDKEKQQRAEEGRRERAKRQKEVRESKC</sequence>
<feature type="chain" id="PRO_0000048501" description="Sodium channel protein type 8 subunit alpha">
    <location>
        <begin position="1"/>
        <end position="1978"/>
    </location>
</feature>
<feature type="topological domain" description="Cytoplasmic" evidence="26">
    <location>
        <begin position="1"/>
        <end position="132"/>
    </location>
</feature>
<feature type="transmembrane region" description="Helical; Name=S1 of repeat I" evidence="2">
    <location>
        <begin position="133"/>
        <end position="151"/>
    </location>
</feature>
<feature type="topological domain" description="Extracellular" evidence="26">
    <location>
        <begin position="152"/>
        <end position="158"/>
    </location>
</feature>
<feature type="transmembrane region" description="Helical; Name=S2 of repeat I" evidence="2">
    <location>
        <begin position="159"/>
        <end position="179"/>
    </location>
</feature>
<feature type="topological domain" description="Cytoplasmic" evidence="26">
    <location>
        <begin position="180"/>
        <end position="193"/>
    </location>
</feature>
<feature type="transmembrane region" description="Helical; Name=S3 of repeat I" evidence="2">
    <location>
        <begin position="194"/>
        <end position="211"/>
    </location>
</feature>
<feature type="topological domain" description="Extracellular" evidence="26">
    <location>
        <begin position="212"/>
        <end position="217"/>
    </location>
</feature>
<feature type="transmembrane region" description="Helical; Name=S4 of repeat I" evidence="2">
    <location>
        <begin position="218"/>
        <end position="234"/>
    </location>
</feature>
<feature type="topological domain" description="Cytoplasmic" evidence="26">
    <location>
        <begin position="235"/>
        <end position="253"/>
    </location>
</feature>
<feature type="transmembrane region" description="Helical; Name=S5 of repeat I" evidence="2">
    <location>
        <begin position="254"/>
        <end position="273"/>
    </location>
</feature>
<feature type="topological domain" description="Extracellular" evidence="26">
    <location>
        <begin position="274"/>
        <end position="355"/>
    </location>
</feature>
<feature type="intramembrane region" description="Pore-forming" evidence="2">
    <location>
        <begin position="356"/>
        <end position="380"/>
    </location>
</feature>
<feature type="topological domain" description="Extracellular" evidence="26">
    <location>
        <begin position="381"/>
        <end position="387"/>
    </location>
</feature>
<feature type="transmembrane region" description="Helical; Name=S6 of repeat I" evidence="2">
    <location>
        <begin position="388"/>
        <end position="408"/>
    </location>
</feature>
<feature type="topological domain" description="Cytoplasmic" evidence="26">
    <location>
        <begin position="409"/>
        <end position="751"/>
    </location>
</feature>
<feature type="transmembrane region" description="Helical; Name=S1 of repeat II" evidence="2">
    <location>
        <begin position="752"/>
        <end position="770"/>
    </location>
</feature>
<feature type="topological domain" description="Extracellular" evidence="26">
    <location>
        <begin position="771"/>
        <end position="781"/>
    </location>
</feature>
<feature type="transmembrane region" description="Helical; Name=S2 of repeat II" evidence="2">
    <location>
        <begin position="782"/>
        <end position="801"/>
    </location>
</feature>
<feature type="topological domain" description="Cytoplasmic" evidence="26">
    <location>
        <begin position="802"/>
        <end position="815"/>
    </location>
</feature>
<feature type="transmembrane region" description="Helical; Name=S3 of repeat II" evidence="2">
    <location>
        <begin position="816"/>
        <end position="835"/>
    </location>
</feature>
<feature type="topological domain" description="Extracellular" evidence="26">
    <location>
        <begin position="836"/>
        <end position="837"/>
    </location>
</feature>
<feature type="transmembrane region" description="Helical; Name=S4 of repeat II" evidence="2">
    <location>
        <begin position="838"/>
        <end position="855"/>
    </location>
</feature>
<feature type="topological domain" description="Cytoplasmic" evidence="26">
    <location>
        <begin position="856"/>
        <end position="871"/>
    </location>
</feature>
<feature type="transmembrane region" description="Helical; Name=S5 of repeat II" evidence="2">
    <location>
        <begin position="872"/>
        <end position="890"/>
    </location>
</feature>
<feature type="topological domain" description="Extracellular" evidence="26">
    <location>
        <begin position="891"/>
        <end position="919"/>
    </location>
</feature>
<feature type="intramembrane region" description="Pore-forming" evidence="2">
    <location>
        <begin position="920"/>
        <end position="940"/>
    </location>
</feature>
<feature type="topological domain" description="Extracellular" evidence="26">
    <location>
        <begin position="941"/>
        <end position="953"/>
    </location>
</feature>
<feature type="transmembrane region" description="Helical; Name=S6 of repeat II" evidence="2">
    <location>
        <begin position="954"/>
        <end position="974"/>
    </location>
</feature>
<feature type="topological domain" description="Cytoplasmic" evidence="26">
    <location>
        <begin position="975"/>
        <end position="1197"/>
    </location>
</feature>
<feature type="transmembrane region" description="Helical; Name=S1 of repeat III" evidence="2">
    <location>
        <begin position="1198"/>
        <end position="1215"/>
    </location>
</feature>
<feature type="topological domain" description="Extracellular" evidence="26">
    <location>
        <begin position="1216"/>
        <end position="1228"/>
    </location>
</feature>
<feature type="transmembrane region" description="Helical; Name=S2 of repeat III" evidence="2">
    <location>
        <begin position="1229"/>
        <end position="1247"/>
    </location>
</feature>
<feature type="topological domain" description="Cytoplasmic" evidence="26">
    <location>
        <begin position="1248"/>
        <end position="1261"/>
    </location>
</feature>
<feature type="transmembrane region" description="Helical; Name=S3 of repeat III" evidence="2">
    <location>
        <begin position="1262"/>
        <end position="1280"/>
    </location>
</feature>
<feature type="topological domain" description="Extracellular" evidence="26">
    <location>
        <begin position="1281"/>
        <end position="1288"/>
    </location>
</feature>
<feature type="transmembrane region" description="Helical; Name=S4 of repeat III" evidence="2">
    <location>
        <begin position="1289"/>
        <end position="1307"/>
    </location>
</feature>
<feature type="topological domain" description="Cytoplasmic" evidence="26">
    <location>
        <begin position="1308"/>
        <end position="1324"/>
    </location>
</feature>
<feature type="transmembrane region" description="Helical; Name=S5 of repeat III" evidence="2">
    <location>
        <begin position="1325"/>
        <end position="1344"/>
    </location>
</feature>
<feature type="topological domain" description="Extracellular" evidence="26">
    <location>
        <begin position="1345"/>
        <end position="1397"/>
    </location>
</feature>
<feature type="intramembrane region" description="Pore-forming" evidence="2">
    <location>
        <begin position="1398"/>
        <end position="1419"/>
    </location>
</feature>
<feature type="topological domain" description="Extracellular" evidence="26">
    <location>
        <begin position="1420"/>
        <end position="1436"/>
    </location>
</feature>
<feature type="transmembrane region" description="Helical; Name=S6 of repeat III" evidence="2">
    <location>
        <begin position="1437"/>
        <end position="1458"/>
    </location>
</feature>
<feature type="topological domain" description="Cytoplasmic" evidence="26">
    <location>
        <begin position="1459"/>
        <end position="1521"/>
    </location>
</feature>
<feature type="transmembrane region" description="Helical; Name=S1 of repeat IV" evidence="2">
    <location>
        <begin position="1522"/>
        <end position="1539"/>
    </location>
</feature>
<feature type="topological domain" description="Extracellular" evidence="26">
    <location>
        <begin position="1540"/>
        <end position="1550"/>
    </location>
</feature>
<feature type="transmembrane region" description="Helical; Name=S2 of repeat IV" evidence="2">
    <location>
        <begin position="1551"/>
        <end position="1569"/>
    </location>
</feature>
<feature type="topological domain" description="Cytoplasmic" evidence="26">
    <location>
        <begin position="1570"/>
        <end position="1581"/>
    </location>
</feature>
<feature type="transmembrane region" description="Helical; Name=S3 of repeat IV" evidence="2">
    <location>
        <begin position="1582"/>
        <end position="1599"/>
    </location>
</feature>
<feature type="topological domain" description="Extracellular" evidence="26">
    <location>
        <begin position="1600"/>
        <end position="1612"/>
    </location>
</feature>
<feature type="transmembrane region" description="Helical; Name=S4 of repeat IV" evidence="2">
    <location>
        <begin position="1613"/>
        <end position="1629"/>
    </location>
</feature>
<feature type="topological domain" description="Cytoplasmic" evidence="26">
    <location>
        <begin position="1630"/>
        <end position="1648"/>
    </location>
</feature>
<feature type="transmembrane region" description="Helical; Name=S5 of repeat IV" evidence="2">
    <location>
        <begin position="1649"/>
        <end position="1666"/>
    </location>
</feature>
<feature type="topological domain" description="Extracellular" evidence="26">
    <location>
        <begin position="1667"/>
        <end position="1688"/>
    </location>
</feature>
<feature type="intramembrane region" description="Pore-forming" evidence="2">
    <location>
        <begin position="1689"/>
        <end position="1711"/>
    </location>
</feature>
<feature type="topological domain" description="Extracellular" evidence="26">
    <location>
        <begin position="1712"/>
        <end position="1740"/>
    </location>
</feature>
<feature type="transmembrane region" description="Helical; Name=S6 of repeat IV" evidence="2">
    <location>
        <begin position="1741"/>
        <end position="1763"/>
    </location>
</feature>
<feature type="topological domain" description="Cytoplasmic" evidence="26">
    <location>
        <begin position="1764"/>
        <end position="1978"/>
    </location>
</feature>
<feature type="repeat" description="I" evidence="26">
    <location>
        <begin position="114"/>
        <end position="442"/>
    </location>
</feature>
<feature type="repeat" description="II" evidence="26">
    <location>
        <begin position="733"/>
        <end position="1005"/>
    </location>
</feature>
<feature type="repeat" description="III" evidence="26">
    <location>
        <begin position="1178"/>
        <end position="1493"/>
    </location>
</feature>
<feature type="repeat" description="IV" evidence="26">
    <location>
        <begin position="1502"/>
        <end position="1799"/>
    </location>
</feature>
<feature type="domain" description="IQ" evidence="8 26">
    <location>
        <begin position="1893"/>
        <end position="1922"/>
    </location>
</feature>
<feature type="region of interest" description="Disordered" evidence="9">
    <location>
        <begin position="1"/>
        <end position="20"/>
    </location>
</feature>
<feature type="region of interest" description="Disordered" evidence="9">
    <location>
        <begin position="28"/>
        <end position="62"/>
    </location>
</feature>
<feature type="region of interest" description="Disordered" evidence="9">
    <location>
        <begin position="446"/>
        <end position="530"/>
    </location>
</feature>
<feature type="region of interest" description="Disordered" evidence="9">
    <location>
        <begin position="576"/>
        <end position="597"/>
    </location>
</feature>
<feature type="region of interest" description="Disordered" evidence="9">
    <location>
        <begin position="1105"/>
        <end position="1146"/>
    </location>
</feature>
<feature type="region of interest" description="Disordered" evidence="9">
    <location>
        <begin position="1924"/>
        <end position="1978"/>
    </location>
</feature>
<feature type="compositionally biased region" description="Basic and acidic residues" evidence="9">
    <location>
        <begin position="28"/>
        <end position="61"/>
    </location>
</feature>
<feature type="compositionally biased region" description="Low complexity" evidence="9">
    <location>
        <begin position="473"/>
        <end position="486"/>
    </location>
</feature>
<feature type="compositionally biased region" description="Basic residues" evidence="9">
    <location>
        <begin position="489"/>
        <end position="500"/>
    </location>
</feature>
<feature type="compositionally biased region" description="Basic and acidic residues" evidence="9">
    <location>
        <begin position="501"/>
        <end position="530"/>
    </location>
</feature>
<feature type="compositionally biased region" description="Basic and acidic residues" evidence="9">
    <location>
        <begin position="586"/>
        <end position="597"/>
    </location>
</feature>
<feature type="compositionally biased region" description="Polar residues" evidence="9">
    <location>
        <begin position="1936"/>
        <end position="1947"/>
    </location>
</feature>
<feature type="compositionally biased region" description="Basic and acidic residues" evidence="9">
    <location>
        <begin position="1949"/>
        <end position="1978"/>
    </location>
</feature>
<feature type="binding site" evidence="6">
    <location>
        <position position="373"/>
    </location>
    <ligand>
        <name>Na(+)</name>
        <dbReference type="ChEBI" id="CHEBI:29101"/>
        <label>2</label>
    </ligand>
</feature>
<feature type="binding site" evidence="6">
    <location>
        <position position="934"/>
    </location>
    <ligand>
        <name>Na(+)</name>
        <dbReference type="ChEBI" id="CHEBI:29101"/>
        <label>1</label>
    </ligand>
</feature>
<feature type="binding site" evidence="6">
    <location>
        <position position="937"/>
    </location>
    <ligand>
        <name>Na(+)</name>
        <dbReference type="ChEBI" id="CHEBI:29101"/>
        <label>1</label>
    </ligand>
</feature>
<feature type="modified residue" description="Phosphoserine" evidence="3">
    <location>
        <position position="518"/>
    </location>
</feature>
<feature type="modified residue" description="Phosphoserine" evidence="3">
    <location>
        <position position="520"/>
    </location>
</feature>
<feature type="modified residue" description="Phosphoserine; by PKC" evidence="5">
    <location>
        <position position="1495"/>
    </location>
</feature>
<feature type="glycosylation site" description="N-linked (GlcNAc...) asparagine" evidence="7">
    <location>
        <position position="215"/>
    </location>
</feature>
<feature type="glycosylation site" description="N-linked (GlcNAc...) asparagine" evidence="7">
    <location>
        <position position="289"/>
    </location>
</feature>
<feature type="glycosylation site" description="N-linked (GlcNAc...) asparagine" evidence="7">
    <location>
        <position position="295"/>
    </location>
</feature>
<feature type="glycosylation site" description="N-linked (GlcNAc...) asparagine" evidence="7">
    <location>
        <position position="308"/>
    </location>
</feature>
<feature type="glycosylation site" description="N-linked (GlcNAc...) asparagine" evidence="7">
    <location>
        <position position="326"/>
    </location>
</feature>
<feature type="glycosylation site" description="N-linked (GlcNAc...) asparagine" evidence="7">
    <location>
        <position position="1356"/>
    </location>
</feature>
<feature type="glycosylation site" description="N-linked (GlcNAc...) asparagine" evidence="7">
    <location>
        <position position="1370"/>
    </location>
</feature>
<feature type="glycosylation site" description="N-linked (GlcNAc...) asparagine" evidence="7">
    <location>
        <position position="1381"/>
    </location>
</feature>
<feature type="disulfide bond" evidence="2">
    <location>
        <begin position="281"/>
        <end position="333"/>
    </location>
</feature>
<feature type="disulfide bond" description="Interchain; with SCN2B or SCN4B" evidence="4">
    <location>
        <position position="902"/>
    </location>
</feature>
<feature type="disulfide bond" description="Interchain; with the conotoxin GVIIJ (when the channel is not linked to SCN2B or SCN4B; the bond to SCN2B or SCN4B protects the channel from the inhibition by toxin)" evidence="4">
    <location>
        <position position="902"/>
    </location>
</feature>
<feature type="disulfide bond" evidence="6">
    <location>
        <begin position="904"/>
        <end position="910"/>
    </location>
</feature>
<feature type="disulfide bond" evidence="2">
    <location>
        <begin position="942"/>
        <end position="951"/>
    </location>
</feature>
<feature type="disulfide bond" evidence="6">
    <location>
        <begin position="1354"/>
        <end position="1374"/>
    </location>
</feature>
<feature type="disulfide bond" evidence="6">
    <location>
        <begin position="1719"/>
        <end position="1734"/>
    </location>
</feature>
<feature type="splice variant" id="VSP_050594" description="In isoform 2." evidence="23">
    <location>
        <begin position="428"/>
        <end position="673"/>
    </location>
</feature>
<feature type="splice variant" id="VSP_050595" description="In isoform 3." evidence="25">
    <original>E</original>
    <variation>EVKIDKAATDS</variation>
    <location>
        <position position="664"/>
    </location>
</feature>
<feature type="splice variant" id="VSP_050598" description="In isoform 5." evidence="24">
    <location>
        <begin position="1272"/>
        <end position="1312"/>
    </location>
</feature>
<feature type="splice variant" id="VSP_050596" description="In isoform 4." evidence="24">
    <original>SLVSLIAN</original>
    <variation>PLSLSGLI</variation>
    <location>
        <begin position="1273"/>
        <end position="1280"/>
    </location>
</feature>
<feature type="splice variant" id="VSP_050597" description="In isoform 4." evidence="24">
    <location>
        <begin position="1281"/>
        <end position="1978"/>
    </location>
</feature>
<feature type="sequence variant" evidence="12 19">
    <original>V</original>
    <variation>L</variation>
    <location>
        <position position="5"/>
    </location>
</feature>
<feature type="sequence variant" description="In medjo." evidence="19">
    <original>A</original>
    <variation>T</variation>
    <location>
        <position position="1317"/>
    </location>
</feature>
<feature type="mutagenesis site" description="Decrease in sensitivity to the scorpion toxin BMK M1." evidence="14">
    <original>D</original>
    <variation>E</variation>
    <location>
        <position position="1602"/>
    </location>
</feature>
<feature type="mutagenesis site" description="Decreases interaction with CALM1 in the absence of calcium." evidence="15">
    <original>Q</original>
    <variation>A</variation>
    <location>
        <position position="1901"/>
    </location>
</feature>
<feature type="mutagenesis site" description="Decreases interaction with CALM1 in the presence and absence of calcium and reduces rate of channel inactivation." evidence="15">
    <original>R</original>
    <variation>A</variation>
    <location>
        <position position="1902"/>
    </location>
</feature>
<feature type="mutagenesis site" description="Decreases interaction with CALM1 in the presence and absence of calcium and reduces rate of channel inactivation." evidence="15">
    <original>Y</original>
    <variation>A</variation>
    <location>
        <position position="1904"/>
    </location>
</feature>
<feature type="mutagenesis site" description="Decreases interaction with CALM1 in the absence of calcium.">
    <original>R</original>
    <variation>A</variation>
    <location>
        <position position="1905"/>
    </location>
</feature>
<feature type="sequence conflict" description="In Ref. 3; BAE34580." evidence="26" ref="3">
    <original>V</original>
    <variation>I</variation>
    <location>
        <position position="207"/>
    </location>
</feature>
<feature type="sequence conflict" description="In Ref. 3; BAE34580." evidence="26" ref="3">
    <original>D</original>
    <variation>N</variation>
    <location>
        <position position="212"/>
    </location>
</feature>
<feature type="sequence conflict" description="In Ref. 3; BAE34580." evidence="26" ref="3">
    <original>P</original>
    <variation>T</variation>
    <location>
        <position position="554"/>
    </location>
</feature>
<feature type="sequence conflict" description="In Ref. 3; BAE34580." evidence="26" ref="3">
    <original>G</original>
    <variation>D</variation>
    <location>
        <position position="596"/>
    </location>
</feature>
<feature type="sequence conflict" description="In Ref. 5; AAA65599." evidence="26" ref="5">
    <original>P</original>
    <variation>A</variation>
    <location>
        <position position="1498"/>
    </location>
</feature>
<feature type="sequence conflict" description="In Ref. 5; AAA65599." evidence="26" ref="5">
    <original>R</original>
    <variation>E</variation>
    <location>
        <position position="1504"/>
    </location>
</feature>
<feature type="helix" evidence="33">
    <location>
        <begin position="1893"/>
        <end position="1912"/>
    </location>
</feature>
<name>SCN8A_MOUSE</name>
<comment type="function">
    <text evidence="14 15">Pore-forming subunit of a voltage-gated sodium channel complex assuming opened or closed conformations in response to the voltage difference across membranes and through which sodium ions selectively pass along their electrochemical gradient. Contributes to neuronal excitability by regulating action potential threshold and propagation.</text>
</comment>
<comment type="function">
    <molecule>Isoform 5</molecule>
    <text evidence="13">More specifically expressed in non-neuronal cells, could play a role in sodium release from intracellular compartments and participate in the control of podosomes formation and macrophages adhesion and movement.</text>
</comment>
<comment type="catalytic activity">
    <reaction evidence="27 28">
        <text>Na(+)(in) = Na(+)(out)</text>
        <dbReference type="Rhea" id="RHEA:34963"/>
        <dbReference type="ChEBI" id="CHEBI:29101"/>
    </reaction>
</comment>
<comment type="subunit">
    <text evidence="3 6 11 14 15">The voltage-sensitive sodium channel consists of an ion-conducting pore-forming alpha subunit regulated by one or more beta-1 (SCN1B), beta-2 (SCN2B), beta-3 (SCN3B) and/or beta-4 (SCN4B) subunits. Beta-1 (SCN1B) and beta-3 (SCN3B) are non-covalently associated with alpha, while beta-2 (SCN2B) and beta-4 (SCN4B) are covalently linked by disulfide bonds. Interacts with FGF13 (By similarity). Interacts with NEDD4 and NEDD4L (PubMed:15123669). Interacts with FGF14, GBG3, GBB2 and SCN1B (By similarity). Interacts with TMEM233 (By similarity). Interacts with the conotoxin GVIIJ (By similarity). Interacts with the scorpion toxin BMK M1 (PubMed:20678086). Interacts with CALM1; the interaction modulates the inactivation rate of SCN8A (PubMed:23942337).</text>
</comment>
<comment type="interaction">
    <interactant intactId="EBI-6396042">
        <id>Q9WTU3</id>
    </interactant>
    <interactant intactId="EBI-764653">
        <id>P14873</id>
        <label>Map1b</label>
    </interactant>
    <organismsDiffer>false</organismsDiffer>
    <experiments>7</experiments>
</comment>
<comment type="subcellular location">
    <subcellularLocation>
        <location evidence="16">Cell membrane</location>
        <topology evidence="6">Multi-pass membrane protein</topology>
    </subcellularLocation>
    <subcellularLocation>
        <location evidence="16">Cell projection</location>
        <location evidence="16">Axon</location>
    </subcellularLocation>
    <text evidence="16">Mainly localizes to the axon initial segment.</text>
</comment>
<comment type="subcellular location">
    <molecule>Isoform 5</molecule>
    <subcellularLocation>
        <location evidence="13">Cytoplasmic vesicle</location>
    </subcellularLocation>
    <subcellularLocation>
        <location evidence="6">Cell projection</location>
        <location evidence="6">Podosome</location>
    </subcellularLocation>
</comment>
<comment type="alternative products">
    <event type="alternative splicing"/>
    <isoform>
        <id>Q9WTU3-1</id>
        <name evidence="20 21">1</name>
        <name evidence="20">18A</name>
        <sequence type="displayed"/>
    </isoform>
    <isoform>
        <id>Q9WTU3-2</id>
        <name evidence="17">2</name>
        <sequence type="described" ref="VSP_050594"/>
    </isoform>
    <isoform>
        <id>Q9WTU3-3</id>
        <name evidence="21">3</name>
        <sequence type="described" ref="VSP_050595"/>
    </isoform>
    <isoform>
        <id>Q9WTU3-4</id>
        <name evidence="20">4</name>
        <name evidence="20">18N</name>
        <sequence type="described" ref="VSP_050596 VSP_050597"/>
    </isoform>
    <isoform>
        <id>Q9WTU3-5</id>
        <name evidence="20">5</name>
        <sequence type="described" ref="VSP_050598"/>
    </isoform>
</comment>
<comment type="tissue specificity">
    <text evidence="16 17">Expressed in the hippocampus (at protein level) (PubMed:28842554). Expressed in brain, cerebellum and spinal cord.</text>
</comment>
<comment type="tissue specificity">
    <molecule>Isoform 5</molecule>
    <text evidence="13">Expressed in non-neuronal tissues, such as monocytes/macrophages.</text>
</comment>
<comment type="domain">
    <text evidence="26">The sequence contains 4 internal repeats, each with 5 hydrophobic segments (S1, S2, S3, S5, S6) and one positively charged segment (S4). Segments S4 are probably the voltage-sensors and are characterized by a series of positively charged amino acids at every third position.</text>
</comment>
<comment type="PTM">
    <text evidence="11">May be ubiquitinated by NEDD4L; which would promote its endocytosis.</text>
</comment>
<comment type="PTM">
    <text evidence="1">Phosphorylation at Ser-1495 by PKC in a highly conserved cytoplasmic loop slows inactivation of the sodium channel and reduces peak sodium currents.</text>
</comment>
<comment type="disease">
    <text>Defects in Scn8a are the cause of motor endplate disease (med). Med is a recessive neuromuscular disorder that is characterized by lack of signal transmission at the neuromuscular junction, excess preterminal arborization and degeneration of cerebellar Purkinje cells. It produces early onset progressive paralysis of hind limbs, severe muscle atrophy and juvenile lethality.</text>
</comment>
<comment type="disease">
    <text evidence="17 19">Defects in Scn8a are the cause of the jolting mutant (medjo), a mild form of motor endplate disease which is characterized by the absence of spontaneous, regular, simple discharges from Purkinje cells. After 3 weeks of age, jolting mice are unsteady and have wide-based gait and a rhythmical tremor of head and neck induced by attempted movement.</text>
</comment>
<comment type="disease">
    <text evidence="10 29">Defects in Scn8a are a cause of degenerating muscle (dmu). Dmu is an autosomal recessive neuromuscular disorder that is characterized by skeletal and cardiac muscle degeneration. It produces early onset progressive loss of mobility of the hind limbs and subsequent lethality in the first month of life.</text>
</comment>
<comment type="miscellaneous">
    <molecule>Isoform 2</molecule>
    <text evidence="26">Due to aberrant splicing.</text>
</comment>
<comment type="similarity">
    <text evidence="26">Belongs to the sodium channel (TC 1.A.1.10) family. Nav1.6/SCN8A subfamily.</text>
</comment>
<evidence type="ECO:0000250" key="1"/>
<evidence type="ECO:0000250" key="2">
    <source>
        <dbReference type="UniProtKB" id="D0E0C2"/>
    </source>
</evidence>
<evidence type="ECO:0000250" key="3">
    <source>
        <dbReference type="UniProtKB" id="O88420"/>
    </source>
</evidence>
<evidence type="ECO:0000250" key="4">
    <source>
        <dbReference type="UniProtKB" id="P04775"/>
    </source>
</evidence>
<evidence type="ECO:0000250" key="5">
    <source>
        <dbReference type="UniProtKB" id="Q15858"/>
    </source>
</evidence>
<evidence type="ECO:0000250" key="6">
    <source>
        <dbReference type="UniProtKB" id="Q9UQD0"/>
    </source>
</evidence>
<evidence type="ECO:0000255" key="7"/>
<evidence type="ECO:0000255" key="8">
    <source>
        <dbReference type="PROSITE-ProRule" id="PRU00116"/>
    </source>
</evidence>
<evidence type="ECO:0000256" key="9">
    <source>
        <dbReference type="SAM" id="MobiDB-lite"/>
    </source>
</evidence>
<evidence type="ECO:0000269" key="10">
    <source>
    </source>
</evidence>
<evidence type="ECO:0000269" key="11">
    <source>
    </source>
</evidence>
<evidence type="ECO:0000269" key="12">
    <source>
    </source>
</evidence>
<evidence type="ECO:0000269" key="13">
    <source>
    </source>
</evidence>
<evidence type="ECO:0000269" key="14">
    <source>
    </source>
</evidence>
<evidence type="ECO:0000269" key="15">
    <source>
    </source>
</evidence>
<evidence type="ECO:0000269" key="16">
    <source>
    </source>
</evidence>
<evidence type="ECO:0000269" key="17">
    <source>
    </source>
</evidence>
<evidence type="ECO:0000269" key="18">
    <source>
    </source>
</evidence>
<evidence type="ECO:0000269" key="19">
    <source>
    </source>
</evidence>
<evidence type="ECO:0000269" key="20">
    <source>
    </source>
</evidence>
<evidence type="ECO:0000269" key="21">
    <source>
    </source>
</evidence>
<evidence type="ECO:0000303" key="22">
    <source>
    </source>
</evidence>
<evidence type="ECO:0000303" key="23">
    <source>
    </source>
</evidence>
<evidence type="ECO:0000303" key="24">
    <source>
    </source>
</evidence>
<evidence type="ECO:0000303" key="25">
    <source>
    </source>
</evidence>
<evidence type="ECO:0000305" key="26"/>
<evidence type="ECO:0000305" key="27">
    <source>
    </source>
</evidence>
<evidence type="ECO:0000305" key="28">
    <source>
    </source>
</evidence>
<evidence type="ECO:0000305" key="29">
    <source>
    </source>
</evidence>
<evidence type="ECO:0000312" key="30">
    <source>
        <dbReference type="EMBL" id="AAD20438.1"/>
    </source>
</evidence>
<evidence type="ECO:0000312" key="31">
    <source>
        <dbReference type="MGI" id="MGI:103169"/>
    </source>
</evidence>
<evidence type="ECO:0007744" key="32">
    <source>
        <dbReference type="PDB" id="3WFN"/>
    </source>
</evidence>
<evidence type="ECO:0007829" key="33">
    <source>
        <dbReference type="PDB" id="3WFN"/>
    </source>
</evidence>
<reference evidence="26" key="1">
    <citation type="journal article" date="1998" name="Genomics">
        <title>Exon organization, coding sequence, physical mapping, and polymorphic intragenic markers for the human neuronal sodium channel gene SCN8A.</title>
        <authorList>
            <person name="Plummer N.W."/>
            <person name="Galt J."/>
            <person name="Jones J.M."/>
            <person name="Burgess D.L."/>
            <person name="Sprunger L.K."/>
            <person name="Kohrman D.C."/>
            <person name="Meisler M.H."/>
        </authorList>
    </citation>
    <scope>NUCLEOTIDE SEQUENCE [MRNA] (ISOFORMS 1 AND 3)</scope>
    <source>
        <strain evidence="30">C57BL/6J</strain>
    </source>
</reference>
<reference evidence="26" key="2">
    <citation type="journal article" date="1995" name="Nat. Genet.">
        <title>Mutation of a new sodium channel gene, Scn8a, in the mouse mutant 'motor endplate disease'.</title>
        <authorList>
            <person name="Burgess D.L."/>
            <person name="Kohrman D.C."/>
            <person name="Galt J."/>
            <person name="Plummer N.W."/>
            <person name="Jones J.M."/>
            <person name="Spear B."/>
            <person name="Meisler M.H."/>
        </authorList>
    </citation>
    <scope>NUCLEOTIDE SEQUENCE [MRNA] (ISOFORM 2)</scope>
    <scope>TISSUE SPECIFICITY</scope>
    <scope>DISEASE</scope>
    <source>
        <strain evidence="17">C57BL/6J</strain>
        <tissue evidence="17">Brain</tissue>
    </source>
</reference>
<reference key="3">
    <citation type="journal article" date="2005" name="Science">
        <title>The transcriptional landscape of the mammalian genome.</title>
        <authorList>
            <person name="Carninci P."/>
            <person name="Kasukawa T."/>
            <person name="Katayama S."/>
            <person name="Gough J."/>
            <person name="Frith M.C."/>
            <person name="Maeda N."/>
            <person name="Oyama R."/>
            <person name="Ravasi T."/>
            <person name="Lenhard B."/>
            <person name="Wells C."/>
            <person name="Kodzius R."/>
            <person name="Shimokawa K."/>
            <person name="Bajic V.B."/>
            <person name="Brenner S.E."/>
            <person name="Batalov S."/>
            <person name="Forrest A.R."/>
            <person name="Zavolan M."/>
            <person name="Davis M.J."/>
            <person name="Wilming L.G."/>
            <person name="Aidinis V."/>
            <person name="Allen J.E."/>
            <person name="Ambesi-Impiombato A."/>
            <person name="Apweiler R."/>
            <person name="Aturaliya R.N."/>
            <person name="Bailey T.L."/>
            <person name="Bansal M."/>
            <person name="Baxter L."/>
            <person name="Beisel K.W."/>
            <person name="Bersano T."/>
            <person name="Bono H."/>
            <person name="Chalk A.M."/>
            <person name="Chiu K.P."/>
            <person name="Choudhary V."/>
            <person name="Christoffels A."/>
            <person name="Clutterbuck D.R."/>
            <person name="Crowe M.L."/>
            <person name="Dalla E."/>
            <person name="Dalrymple B.P."/>
            <person name="de Bono B."/>
            <person name="Della Gatta G."/>
            <person name="di Bernardo D."/>
            <person name="Down T."/>
            <person name="Engstrom P."/>
            <person name="Fagiolini M."/>
            <person name="Faulkner G."/>
            <person name="Fletcher C.F."/>
            <person name="Fukushima T."/>
            <person name="Furuno M."/>
            <person name="Futaki S."/>
            <person name="Gariboldi M."/>
            <person name="Georgii-Hemming P."/>
            <person name="Gingeras T.R."/>
            <person name="Gojobori T."/>
            <person name="Green R.E."/>
            <person name="Gustincich S."/>
            <person name="Harbers M."/>
            <person name="Hayashi Y."/>
            <person name="Hensch T.K."/>
            <person name="Hirokawa N."/>
            <person name="Hill D."/>
            <person name="Huminiecki L."/>
            <person name="Iacono M."/>
            <person name="Ikeo K."/>
            <person name="Iwama A."/>
            <person name="Ishikawa T."/>
            <person name="Jakt M."/>
            <person name="Kanapin A."/>
            <person name="Katoh M."/>
            <person name="Kawasawa Y."/>
            <person name="Kelso J."/>
            <person name="Kitamura H."/>
            <person name="Kitano H."/>
            <person name="Kollias G."/>
            <person name="Krishnan S.P."/>
            <person name="Kruger A."/>
            <person name="Kummerfeld S.K."/>
            <person name="Kurochkin I.V."/>
            <person name="Lareau L.F."/>
            <person name="Lazarevic D."/>
            <person name="Lipovich L."/>
            <person name="Liu J."/>
            <person name="Liuni S."/>
            <person name="McWilliam S."/>
            <person name="Madan Babu M."/>
            <person name="Madera M."/>
            <person name="Marchionni L."/>
            <person name="Matsuda H."/>
            <person name="Matsuzawa S."/>
            <person name="Miki H."/>
            <person name="Mignone F."/>
            <person name="Miyake S."/>
            <person name="Morris K."/>
            <person name="Mottagui-Tabar S."/>
            <person name="Mulder N."/>
            <person name="Nakano N."/>
            <person name="Nakauchi H."/>
            <person name="Ng P."/>
            <person name="Nilsson R."/>
            <person name="Nishiguchi S."/>
            <person name="Nishikawa S."/>
            <person name="Nori F."/>
            <person name="Ohara O."/>
            <person name="Okazaki Y."/>
            <person name="Orlando V."/>
            <person name="Pang K.C."/>
            <person name="Pavan W.J."/>
            <person name="Pavesi G."/>
            <person name="Pesole G."/>
            <person name="Petrovsky N."/>
            <person name="Piazza S."/>
            <person name="Reed J."/>
            <person name="Reid J.F."/>
            <person name="Ring B.Z."/>
            <person name="Ringwald M."/>
            <person name="Rost B."/>
            <person name="Ruan Y."/>
            <person name="Salzberg S.L."/>
            <person name="Sandelin A."/>
            <person name="Schneider C."/>
            <person name="Schoenbach C."/>
            <person name="Sekiguchi K."/>
            <person name="Semple C.A."/>
            <person name="Seno S."/>
            <person name="Sessa L."/>
            <person name="Sheng Y."/>
            <person name="Shibata Y."/>
            <person name="Shimada H."/>
            <person name="Shimada K."/>
            <person name="Silva D."/>
            <person name="Sinclair B."/>
            <person name="Sperling S."/>
            <person name="Stupka E."/>
            <person name="Sugiura K."/>
            <person name="Sultana R."/>
            <person name="Takenaka Y."/>
            <person name="Taki K."/>
            <person name="Tammoja K."/>
            <person name="Tan S.L."/>
            <person name="Tang S."/>
            <person name="Taylor M.S."/>
            <person name="Tegner J."/>
            <person name="Teichmann S.A."/>
            <person name="Ueda H.R."/>
            <person name="van Nimwegen E."/>
            <person name="Verardo R."/>
            <person name="Wei C.L."/>
            <person name="Yagi K."/>
            <person name="Yamanishi H."/>
            <person name="Zabarovsky E."/>
            <person name="Zhu S."/>
            <person name="Zimmer A."/>
            <person name="Hide W."/>
            <person name="Bult C."/>
            <person name="Grimmond S.M."/>
            <person name="Teasdale R.D."/>
            <person name="Liu E.T."/>
            <person name="Brusic V."/>
            <person name="Quackenbush J."/>
            <person name="Wahlestedt C."/>
            <person name="Mattick J.S."/>
            <person name="Hume D.A."/>
            <person name="Kai C."/>
            <person name="Sasaki D."/>
            <person name="Tomaru Y."/>
            <person name="Fukuda S."/>
            <person name="Kanamori-Katayama M."/>
            <person name="Suzuki M."/>
            <person name="Aoki J."/>
            <person name="Arakawa T."/>
            <person name="Iida J."/>
            <person name="Imamura K."/>
            <person name="Itoh M."/>
            <person name="Kato T."/>
            <person name="Kawaji H."/>
            <person name="Kawagashira N."/>
            <person name="Kawashima T."/>
            <person name="Kojima M."/>
            <person name="Kondo S."/>
            <person name="Konno H."/>
            <person name="Nakano K."/>
            <person name="Ninomiya N."/>
            <person name="Nishio T."/>
            <person name="Okada M."/>
            <person name="Plessy C."/>
            <person name="Shibata K."/>
            <person name="Shiraki T."/>
            <person name="Suzuki S."/>
            <person name="Tagami M."/>
            <person name="Waki K."/>
            <person name="Watahiki A."/>
            <person name="Okamura-Oho Y."/>
            <person name="Suzuki H."/>
            <person name="Kawai J."/>
            <person name="Hayashizaki Y."/>
        </authorList>
    </citation>
    <scope>NUCLEOTIDE SEQUENCE [LARGE SCALE MRNA] OF 1-804</scope>
    <scope>VARIANT LEU-5</scope>
    <source>
        <strain>C57BL/6J</strain>
        <tissue>Visual cortex</tissue>
    </source>
</reference>
<reference evidence="26" key="4">
    <citation type="journal article" date="1996" name="J. Biol. Chem.">
        <title>Mutation detection in the med and medJ alleles of the sodium channel Scn8a. Unusual splicing due to a minor class AT-AC intron.</title>
        <authorList>
            <person name="Kohrman D.C."/>
            <person name="Harris J.B."/>
            <person name="Meisler M.H."/>
        </authorList>
    </citation>
    <scope>NUCLEOTIDE SEQUENCE [GENOMIC DNA] OF 93-205</scope>
    <scope>DISEASE</scope>
    <source>
        <strain evidence="18">129/Sv</strain>
        <tissue evidence="18">Brain</tissue>
    </source>
</reference>
<reference evidence="26" key="5">
    <citation type="submission" date="1995-03" db="EMBL/GenBank/DDBJ databases">
        <title>A putative novel Na channel alpha subunit cDNA isolated from mouse NB2a neuroblastoma cells.</title>
        <authorList>
            <person name="Fan Z."/>
            <person name="Kyle J.W."/>
            <person name="Makielski J.C."/>
        </authorList>
    </citation>
    <scope>NUCLEOTIDE SEQUENCE [MRNA] OF 1411-1686</scope>
</reference>
<reference evidence="26" key="6">
    <citation type="journal article" date="1997" name="J. Biol. Chem.">
        <title>Alternative splicing of the sodium channel SCN8A predicts a truncated two-domain protein in fetal brain and non-neuronal cells.</title>
        <authorList>
            <person name="Plummer N.W."/>
            <person name="McBurney M.W."/>
            <person name="Meisler M.H."/>
        </authorList>
    </citation>
    <scope>ALTERNATIVE SPLICING (ISOFORMS 1; 4 AND 5)</scope>
    <source>
        <tissue evidence="20">Brain</tissue>
        <tissue evidence="20">Fetal brain</tissue>
    </source>
</reference>
<reference key="7">
    <citation type="journal article" date="2004" name="J. Biol. Chem.">
        <title>Regulation of neuronal voltage-gated sodium channels by the ubiquitin-protein ligases Nedd4 and Nedd4-2.</title>
        <authorList>
            <person name="Fotia A.B."/>
            <person name="Ekberg J."/>
            <person name="Adams D.J."/>
            <person name="Cook D.I."/>
            <person name="Poronnik P."/>
            <person name="Kumar S."/>
        </authorList>
    </citation>
    <scope>INTERACTION WITH NEDD4 AND NEDD4L</scope>
    <scope>ACTIVITY REGULATION</scope>
</reference>
<reference key="8">
    <citation type="journal article" date="2009" name="J. Biol. Chem.">
        <title>Regulation of podosome formation in macrophages by a splice variant of the sodium channel SCN8A.</title>
        <authorList>
            <person name="Carrithers M.D."/>
            <person name="Chatterjee G."/>
            <person name="Carrithers L.M."/>
            <person name="Offoha R."/>
            <person name="Iheagwara U."/>
            <person name="Rahner C."/>
            <person name="Graham M."/>
            <person name="Waxman S.G."/>
        </authorList>
    </citation>
    <scope>FUNCTION (ISOFORM 5)</scope>
    <scope>SUBCELLULAR LOCATION (ISOFORM 5)</scope>
    <scope>TISSUE SPECIFICITY (ISOFORM 5)</scope>
</reference>
<reference key="9">
    <citation type="journal article" date="2010" name="Biochem. J.">
        <title>Molecular determination of selectivity of the site 3 modulator (BmK I) to sodium channels in the CNS: a clue to the importance of Nav1.6 in BmK I-induced neuronal hyperexcitability.</title>
        <authorList>
            <person name="He H."/>
            <person name="Liu Z."/>
            <person name="Dong B."/>
            <person name="Zhou J."/>
            <person name="Zhu H."/>
            <person name="Ji Y."/>
        </authorList>
    </citation>
    <scope>FUNCTION</scope>
    <scope>TRANSPORTER ACTIVITY</scope>
    <scope>INTERACTION WITH SCORPION TOXIN BMK M1</scope>
    <scope>MUTAGENESIS OF ASP-1602</scope>
</reference>
<reference evidence="26" key="10">
    <citation type="journal article" date="1996" name="J. Neurosci.">
        <title>A missense mutation in the sodium channel Scn8a is responsible for cerebellar ataxia in the mouse mutant jolting.</title>
        <authorList>
            <person name="Kohrman D.C."/>
            <person name="Smith M.R."/>
            <person name="Goldin A.L."/>
            <person name="Harris J."/>
            <person name="Meisler M.H."/>
        </authorList>
    </citation>
    <scope>VARIANT MEDJO THR-1317</scope>
    <scope>VARIANT LEU-5</scope>
    <source>
        <strain evidence="19">DBA/2WyDi</strain>
    </source>
</reference>
<reference evidence="26" key="11">
    <citation type="journal article" date="2001" name="Hum. Mol. Genet.">
        <title>Pathological and genetic analysis of the degenerating muscle (dmu) mouse: a new allele of Scn8a.</title>
        <authorList>
            <person name="De Repentigny Y."/>
            <person name="Cote P.D."/>
            <person name="Pool M."/>
            <person name="Bernier G."/>
            <person name="Girard S."/>
            <person name="Vidal S.M."/>
            <person name="Kothary R."/>
        </authorList>
    </citation>
    <scope>DISEASE</scope>
</reference>
<reference key="12">
    <citation type="journal article" date="2017" name="Nat. Commun.">
        <title>CDYL suppresses epileptogenesis in mice through repression of axonal Nav1.6 sodium channel expression.</title>
        <authorList>
            <person name="Liu Y."/>
            <person name="Lai S."/>
            <person name="Ma W."/>
            <person name="Ke W."/>
            <person name="Zhang C."/>
            <person name="Liu S."/>
            <person name="Zhang Y."/>
            <person name="Pei F."/>
            <person name="Li S."/>
            <person name="Yi M."/>
            <person name="Shu Y."/>
            <person name="Shang Y."/>
            <person name="Liang J."/>
            <person name="Huang Z."/>
        </authorList>
    </citation>
    <scope>SUBCELLULAR LOCATION</scope>
    <scope>TISSUE SPECIFICITY</scope>
</reference>
<reference evidence="32" key="13">
    <citation type="journal article" date="2013" name="Sci. Rep.">
        <title>Structural basis for the modulation of the neuronal voltage-gated sodium channel NaV1.6 by calmodulin.</title>
        <authorList>
            <person name="Reddy Chichili V.P."/>
            <person name="Xiao Y."/>
            <person name="Seetharaman J."/>
            <person name="Cummins T.R."/>
            <person name="Sivaraman J."/>
        </authorList>
    </citation>
    <scope>X-RAY CRYSTALLOGRAPHY (1.95 ANGSTROMS) OF 1893-1914 IN COMPLEX WITH CALM1</scope>
    <scope>INTERACTION WITH CALM1</scope>
    <scope>FUNCTION</scope>
    <scope>TRANSPORTER ACTIVITY</scope>
    <scope>MUTAGENESIS OF GLN-1901; ARG-1902; TYR-1904 AND ARG-1905</scope>
</reference>
<gene>
    <name evidence="31" type="primary">Scn8a</name>
    <name type="synonym">Nbna1</name>
</gene>
<proteinExistence type="evidence at protein level"/>
<accession>Q9WTU3</accession>
<accession>Q3TYI3</accession>
<accession>Q60828</accession>
<accession>Q60858</accession>
<accession>Q62449</accession>